<accession>A4TMT7</accession>
<sequence>MHNGSPIIRRKSTRVYVGKVPIGDGAPIAVQSMTNTKTTDVDATVAQIKALERVGVDIVRVSIPTMDAAEAFKLIKQQSTVPLVADIHFDYRIALKVAEYGVDCLRINPGNIGNESRIREVVACARDYNIPIRIGINGGSLEKDIQEKYGEPTPEALLESAMRHVDILDRLNFDQFKVSVKASDVFLAVNSYRLLAKQINNPLHLGITEAGGARSGSVKSAIGLGLLLSEGIGDTLRISLAADPVEEVKVGFDILKSLRIRARGINFIACPTCSRQEFDVIGTVNALEQRLEDLITPMDVSIIGCVVNGPGEALVSTIGVTGARNHSGFYEDGVRQKERFDNKAMIDQLEAKIRAKASILDANNRIVINQLDDNK</sequence>
<gene>
    <name evidence="1" type="primary">ispG</name>
    <name type="ordered locus">YPDSF_2224</name>
</gene>
<evidence type="ECO:0000255" key="1">
    <source>
        <dbReference type="HAMAP-Rule" id="MF_00159"/>
    </source>
</evidence>
<keyword id="KW-0004">4Fe-4S</keyword>
<keyword id="KW-0408">Iron</keyword>
<keyword id="KW-0411">Iron-sulfur</keyword>
<keyword id="KW-0414">Isoprene biosynthesis</keyword>
<keyword id="KW-0479">Metal-binding</keyword>
<keyword id="KW-0560">Oxidoreductase</keyword>
<protein>
    <recommendedName>
        <fullName evidence="1">4-hydroxy-3-methylbut-2-en-1-yl diphosphate synthase (flavodoxin)</fullName>
        <ecNumber evidence="1">1.17.7.3</ecNumber>
    </recommendedName>
    <alternativeName>
        <fullName evidence="1">1-hydroxy-2-methyl-2-(E)-butenyl 4-diphosphate synthase</fullName>
    </alternativeName>
</protein>
<organism>
    <name type="scientific">Yersinia pestis (strain Pestoides F)</name>
    <dbReference type="NCBI Taxonomy" id="386656"/>
    <lineage>
        <taxon>Bacteria</taxon>
        <taxon>Pseudomonadati</taxon>
        <taxon>Pseudomonadota</taxon>
        <taxon>Gammaproteobacteria</taxon>
        <taxon>Enterobacterales</taxon>
        <taxon>Yersiniaceae</taxon>
        <taxon>Yersinia</taxon>
    </lineage>
</organism>
<comment type="function">
    <text evidence="1">Converts 2C-methyl-D-erythritol 2,4-cyclodiphosphate (ME-2,4cPP) into 1-hydroxy-2-methyl-2-(E)-butenyl 4-diphosphate.</text>
</comment>
<comment type="catalytic activity">
    <reaction evidence="1">
        <text>(2E)-4-hydroxy-3-methylbut-2-enyl diphosphate + oxidized [flavodoxin] + H2O + 2 H(+) = 2-C-methyl-D-erythritol 2,4-cyclic diphosphate + reduced [flavodoxin]</text>
        <dbReference type="Rhea" id="RHEA:43604"/>
        <dbReference type="Rhea" id="RHEA-COMP:10622"/>
        <dbReference type="Rhea" id="RHEA-COMP:10623"/>
        <dbReference type="ChEBI" id="CHEBI:15377"/>
        <dbReference type="ChEBI" id="CHEBI:15378"/>
        <dbReference type="ChEBI" id="CHEBI:57618"/>
        <dbReference type="ChEBI" id="CHEBI:58210"/>
        <dbReference type="ChEBI" id="CHEBI:58483"/>
        <dbReference type="ChEBI" id="CHEBI:128753"/>
        <dbReference type="EC" id="1.17.7.3"/>
    </reaction>
</comment>
<comment type="cofactor">
    <cofactor evidence="1">
        <name>[4Fe-4S] cluster</name>
        <dbReference type="ChEBI" id="CHEBI:49883"/>
    </cofactor>
    <text evidence="1">Binds 1 [4Fe-4S] cluster.</text>
</comment>
<comment type="pathway">
    <text evidence="1">Isoprenoid biosynthesis; isopentenyl diphosphate biosynthesis via DXP pathway; isopentenyl diphosphate from 1-deoxy-D-xylulose 5-phosphate: step 5/6.</text>
</comment>
<comment type="similarity">
    <text evidence="1">Belongs to the IspG family.</text>
</comment>
<name>ISPG_YERPP</name>
<feature type="chain" id="PRO_1000011548" description="4-hydroxy-3-methylbut-2-en-1-yl diphosphate synthase (flavodoxin)">
    <location>
        <begin position="1"/>
        <end position="375"/>
    </location>
</feature>
<feature type="binding site" evidence="1">
    <location>
        <position position="270"/>
    </location>
    <ligand>
        <name>[4Fe-4S] cluster</name>
        <dbReference type="ChEBI" id="CHEBI:49883"/>
    </ligand>
</feature>
<feature type="binding site" evidence="1">
    <location>
        <position position="273"/>
    </location>
    <ligand>
        <name>[4Fe-4S] cluster</name>
        <dbReference type="ChEBI" id="CHEBI:49883"/>
    </ligand>
</feature>
<feature type="binding site" evidence="1">
    <location>
        <position position="305"/>
    </location>
    <ligand>
        <name>[4Fe-4S] cluster</name>
        <dbReference type="ChEBI" id="CHEBI:49883"/>
    </ligand>
</feature>
<feature type="binding site" evidence="1">
    <location>
        <position position="312"/>
    </location>
    <ligand>
        <name>[4Fe-4S] cluster</name>
        <dbReference type="ChEBI" id="CHEBI:49883"/>
    </ligand>
</feature>
<proteinExistence type="inferred from homology"/>
<dbReference type="EC" id="1.17.7.3" evidence="1"/>
<dbReference type="EMBL" id="CP000668">
    <property type="protein sequence ID" value="ABP40599.1"/>
    <property type="molecule type" value="Genomic_DNA"/>
</dbReference>
<dbReference type="RefSeq" id="WP_011906325.1">
    <property type="nucleotide sequence ID" value="NZ_CP009715.1"/>
</dbReference>
<dbReference type="SMR" id="A4TMT7"/>
<dbReference type="KEGG" id="ypp:YPDSF_2224"/>
<dbReference type="PATRIC" id="fig|386656.14.peg.3712"/>
<dbReference type="UniPathway" id="UPA00056">
    <property type="reaction ID" value="UER00096"/>
</dbReference>
<dbReference type="GO" id="GO:0051539">
    <property type="term" value="F:4 iron, 4 sulfur cluster binding"/>
    <property type="evidence" value="ECO:0007669"/>
    <property type="project" value="UniProtKB-UniRule"/>
</dbReference>
<dbReference type="GO" id="GO:0046429">
    <property type="term" value="F:4-hydroxy-3-methylbut-2-en-1-yl diphosphate synthase activity (ferredoxin)"/>
    <property type="evidence" value="ECO:0007669"/>
    <property type="project" value="UniProtKB-UniRule"/>
</dbReference>
<dbReference type="GO" id="GO:0141197">
    <property type="term" value="F:4-hydroxy-3-methylbut-2-enyl-diphosphate synthase activity (flavodoxin)"/>
    <property type="evidence" value="ECO:0007669"/>
    <property type="project" value="UniProtKB-EC"/>
</dbReference>
<dbReference type="GO" id="GO:0005506">
    <property type="term" value="F:iron ion binding"/>
    <property type="evidence" value="ECO:0007669"/>
    <property type="project" value="InterPro"/>
</dbReference>
<dbReference type="GO" id="GO:0019288">
    <property type="term" value="P:isopentenyl diphosphate biosynthetic process, methylerythritol 4-phosphate pathway"/>
    <property type="evidence" value="ECO:0007669"/>
    <property type="project" value="UniProtKB-UniRule"/>
</dbReference>
<dbReference type="GO" id="GO:0016114">
    <property type="term" value="P:terpenoid biosynthetic process"/>
    <property type="evidence" value="ECO:0007669"/>
    <property type="project" value="InterPro"/>
</dbReference>
<dbReference type="FunFam" id="3.20.20.20:FF:000001">
    <property type="entry name" value="4-hydroxy-3-methylbut-2-en-1-yl diphosphate synthase (flavodoxin)"/>
    <property type="match status" value="1"/>
</dbReference>
<dbReference type="FunFam" id="3.30.413.10:FF:000002">
    <property type="entry name" value="4-hydroxy-3-methylbut-2-en-1-yl diphosphate synthase (flavodoxin)"/>
    <property type="match status" value="1"/>
</dbReference>
<dbReference type="Gene3D" id="3.20.20.20">
    <property type="entry name" value="Dihydropteroate synthase-like"/>
    <property type="match status" value="1"/>
</dbReference>
<dbReference type="Gene3D" id="3.30.413.10">
    <property type="entry name" value="Sulfite Reductase Hemoprotein, domain 1"/>
    <property type="match status" value="1"/>
</dbReference>
<dbReference type="HAMAP" id="MF_00159">
    <property type="entry name" value="IspG"/>
    <property type="match status" value="1"/>
</dbReference>
<dbReference type="InterPro" id="IPR011005">
    <property type="entry name" value="Dihydropteroate_synth-like_sf"/>
</dbReference>
<dbReference type="InterPro" id="IPR036849">
    <property type="entry name" value="Enolase-like_C_sf"/>
</dbReference>
<dbReference type="InterPro" id="IPR016425">
    <property type="entry name" value="IspG_bac"/>
</dbReference>
<dbReference type="InterPro" id="IPR004588">
    <property type="entry name" value="IspG_bac-typ"/>
</dbReference>
<dbReference type="InterPro" id="IPR045854">
    <property type="entry name" value="NO2/SO3_Rdtase_4Fe4S_sf"/>
</dbReference>
<dbReference type="NCBIfam" id="TIGR00612">
    <property type="entry name" value="ispG_gcpE"/>
    <property type="match status" value="1"/>
</dbReference>
<dbReference type="NCBIfam" id="NF001540">
    <property type="entry name" value="PRK00366.1"/>
    <property type="match status" value="1"/>
</dbReference>
<dbReference type="PANTHER" id="PTHR30454">
    <property type="entry name" value="4-HYDROXY-3-METHYLBUT-2-EN-1-YL DIPHOSPHATE SYNTHASE"/>
    <property type="match status" value="1"/>
</dbReference>
<dbReference type="PANTHER" id="PTHR30454:SF0">
    <property type="entry name" value="4-HYDROXY-3-METHYLBUT-2-EN-1-YL DIPHOSPHATE SYNTHASE (FERREDOXIN), CHLOROPLASTIC"/>
    <property type="match status" value="1"/>
</dbReference>
<dbReference type="Pfam" id="PF04551">
    <property type="entry name" value="GcpE"/>
    <property type="match status" value="1"/>
</dbReference>
<dbReference type="PIRSF" id="PIRSF004640">
    <property type="entry name" value="IspG"/>
    <property type="match status" value="1"/>
</dbReference>
<dbReference type="SUPFAM" id="SSF51604">
    <property type="entry name" value="Enolase C-terminal domain-like"/>
    <property type="match status" value="1"/>
</dbReference>
<dbReference type="SUPFAM" id="SSF56014">
    <property type="entry name" value="Nitrite and sulphite reductase 4Fe-4S domain-like"/>
    <property type="match status" value="1"/>
</dbReference>
<reference key="1">
    <citation type="submission" date="2007-02" db="EMBL/GenBank/DDBJ databases">
        <title>Complete sequence of chromosome of Yersinia pestis Pestoides F.</title>
        <authorList>
            <consortium name="US DOE Joint Genome Institute"/>
            <person name="Copeland A."/>
            <person name="Lucas S."/>
            <person name="Lapidus A."/>
            <person name="Barry K."/>
            <person name="Detter J.C."/>
            <person name="Glavina del Rio T."/>
            <person name="Hammon N."/>
            <person name="Israni S."/>
            <person name="Dalin E."/>
            <person name="Tice H."/>
            <person name="Pitluck S."/>
            <person name="Di Bartolo G."/>
            <person name="Chain P."/>
            <person name="Malfatti S."/>
            <person name="Shin M."/>
            <person name="Vergez L."/>
            <person name="Schmutz J."/>
            <person name="Larimer F."/>
            <person name="Land M."/>
            <person name="Hauser L."/>
            <person name="Worsham P."/>
            <person name="Chu M."/>
            <person name="Bearden S."/>
            <person name="Garcia E."/>
            <person name="Richardson P."/>
        </authorList>
    </citation>
    <scope>NUCLEOTIDE SEQUENCE [LARGE SCALE GENOMIC DNA]</scope>
    <source>
        <strain>Pestoides F</strain>
    </source>
</reference>